<proteinExistence type="inferred from homology"/>
<comment type="function">
    <text evidence="1">Catalyzes the reversible phosphatidyl group transfer from one phosphatidylglycerol molecule to another to form cardiolipin (CL) (diphosphatidylglycerol) and glycerol.</text>
</comment>
<comment type="catalytic activity">
    <reaction evidence="1">
        <text>2 a 1,2-diacyl-sn-glycero-3-phospho-(1'-sn-glycerol) = a cardiolipin + glycerol</text>
        <dbReference type="Rhea" id="RHEA:31451"/>
        <dbReference type="ChEBI" id="CHEBI:17754"/>
        <dbReference type="ChEBI" id="CHEBI:62237"/>
        <dbReference type="ChEBI" id="CHEBI:64716"/>
    </reaction>
</comment>
<comment type="subcellular location">
    <subcellularLocation>
        <location evidence="1">Cell inner membrane</location>
        <topology evidence="1">Multi-pass membrane protein</topology>
    </subcellularLocation>
</comment>
<comment type="similarity">
    <text evidence="1">Belongs to the phospholipase D family. Cardiolipin synthase subfamily. ClsA sub-subfamily.</text>
</comment>
<dbReference type="EC" id="2.7.8.-" evidence="1"/>
<dbReference type="EMBL" id="CP000647">
    <property type="protein sequence ID" value="ABR77618.1"/>
    <property type="molecule type" value="Genomic_DNA"/>
</dbReference>
<dbReference type="RefSeq" id="WP_002910077.1">
    <property type="nucleotide sequence ID" value="NC_009648.1"/>
</dbReference>
<dbReference type="SMR" id="A6TAJ7"/>
<dbReference type="STRING" id="272620.KPN_02190"/>
<dbReference type="PaxDb" id="272620-KPN_02190"/>
<dbReference type="DNASU" id="5341967"/>
<dbReference type="EnsemblBacteria" id="ABR77618">
    <property type="protein sequence ID" value="ABR77618"/>
    <property type="gene ID" value="KPN_02190"/>
</dbReference>
<dbReference type="KEGG" id="kpn:KPN_02190"/>
<dbReference type="HOGENOM" id="CLU_038053_1_0_6"/>
<dbReference type="Proteomes" id="UP000000265">
    <property type="component" value="Chromosome"/>
</dbReference>
<dbReference type="GO" id="GO:0005886">
    <property type="term" value="C:plasma membrane"/>
    <property type="evidence" value="ECO:0007669"/>
    <property type="project" value="UniProtKB-SubCell"/>
</dbReference>
<dbReference type="GO" id="GO:0008808">
    <property type="term" value="F:cardiolipin synthase activity"/>
    <property type="evidence" value="ECO:0007669"/>
    <property type="project" value="InterPro"/>
</dbReference>
<dbReference type="GO" id="GO:0032049">
    <property type="term" value="P:cardiolipin biosynthetic process"/>
    <property type="evidence" value="ECO:0007669"/>
    <property type="project" value="InterPro"/>
</dbReference>
<dbReference type="CDD" id="cd09152">
    <property type="entry name" value="PLDc_EcCLS_like_1"/>
    <property type="match status" value="1"/>
</dbReference>
<dbReference type="CDD" id="cd09158">
    <property type="entry name" value="PLDc_EcCLS_like_2"/>
    <property type="match status" value="1"/>
</dbReference>
<dbReference type="FunFam" id="3.30.870.10:FF:000002">
    <property type="entry name" value="Cardiolipin synthase A"/>
    <property type="match status" value="1"/>
</dbReference>
<dbReference type="FunFam" id="3.30.870.10:FF:000003">
    <property type="entry name" value="Cardiolipin synthase A"/>
    <property type="match status" value="1"/>
</dbReference>
<dbReference type="Gene3D" id="3.30.870.10">
    <property type="entry name" value="Endonuclease Chain A"/>
    <property type="match status" value="2"/>
</dbReference>
<dbReference type="HAMAP" id="MF_00190">
    <property type="entry name" value="Cardiolipin_synth_ClsA"/>
    <property type="match status" value="1"/>
</dbReference>
<dbReference type="InterPro" id="IPR022924">
    <property type="entry name" value="Cardiolipin_synthase"/>
</dbReference>
<dbReference type="InterPro" id="IPR030840">
    <property type="entry name" value="CL_synthase_A"/>
</dbReference>
<dbReference type="InterPro" id="IPR027379">
    <property type="entry name" value="CLS_N"/>
</dbReference>
<dbReference type="InterPro" id="IPR025202">
    <property type="entry name" value="PLD-like_dom"/>
</dbReference>
<dbReference type="InterPro" id="IPR001736">
    <property type="entry name" value="PLipase_D/transphosphatidylase"/>
</dbReference>
<dbReference type="NCBIfam" id="TIGR04265">
    <property type="entry name" value="bac_cardiolipin"/>
    <property type="match status" value="1"/>
</dbReference>
<dbReference type="PANTHER" id="PTHR21248">
    <property type="entry name" value="CARDIOLIPIN SYNTHASE"/>
    <property type="match status" value="1"/>
</dbReference>
<dbReference type="PANTHER" id="PTHR21248:SF22">
    <property type="entry name" value="PHOSPHOLIPASE D"/>
    <property type="match status" value="1"/>
</dbReference>
<dbReference type="Pfam" id="PF13091">
    <property type="entry name" value="PLDc_2"/>
    <property type="match status" value="2"/>
</dbReference>
<dbReference type="Pfam" id="PF13396">
    <property type="entry name" value="PLDc_N"/>
    <property type="match status" value="1"/>
</dbReference>
<dbReference type="SMART" id="SM00155">
    <property type="entry name" value="PLDc"/>
    <property type="match status" value="2"/>
</dbReference>
<dbReference type="SUPFAM" id="SSF56024">
    <property type="entry name" value="Phospholipase D/nuclease"/>
    <property type="match status" value="2"/>
</dbReference>
<dbReference type="PROSITE" id="PS50035">
    <property type="entry name" value="PLD"/>
    <property type="match status" value="2"/>
</dbReference>
<name>CLSA_KLEP7</name>
<organism>
    <name type="scientific">Klebsiella pneumoniae subsp. pneumoniae (strain ATCC 700721 / MGH 78578)</name>
    <dbReference type="NCBI Taxonomy" id="272620"/>
    <lineage>
        <taxon>Bacteria</taxon>
        <taxon>Pseudomonadati</taxon>
        <taxon>Pseudomonadota</taxon>
        <taxon>Gammaproteobacteria</taxon>
        <taxon>Enterobacterales</taxon>
        <taxon>Enterobacteriaceae</taxon>
        <taxon>Klebsiella/Raoultella group</taxon>
        <taxon>Klebsiella</taxon>
        <taxon>Klebsiella pneumoniae complex</taxon>
    </lineage>
</organism>
<feature type="chain" id="PRO_1000058490" description="Cardiolipin synthase A">
    <location>
        <begin position="1"/>
        <end position="486"/>
    </location>
</feature>
<feature type="transmembrane region" description="Helical" evidence="1">
    <location>
        <begin position="3"/>
        <end position="23"/>
    </location>
</feature>
<feature type="transmembrane region" description="Helical" evidence="1">
    <location>
        <begin position="38"/>
        <end position="58"/>
    </location>
</feature>
<feature type="domain" description="PLD phosphodiesterase 1" evidence="1">
    <location>
        <begin position="219"/>
        <end position="246"/>
    </location>
</feature>
<feature type="domain" description="PLD phosphodiesterase 2" evidence="1">
    <location>
        <begin position="399"/>
        <end position="426"/>
    </location>
</feature>
<feature type="active site" evidence="1">
    <location>
        <position position="224"/>
    </location>
</feature>
<feature type="active site" evidence="1">
    <location>
        <position position="226"/>
    </location>
</feature>
<feature type="active site" evidence="1">
    <location>
        <position position="231"/>
    </location>
</feature>
<feature type="active site" evidence="1">
    <location>
        <position position="404"/>
    </location>
</feature>
<feature type="active site" evidence="1">
    <location>
        <position position="406"/>
    </location>
</feature>
<feature type="active site" evidence="1">
    <location>
        <position position="411"/>
    </location>
</feature>
<evidence type="ECO:0000255" key="1">
    <source>
        <dbReference type="HAMAP-Rule" id="MF_00190"/>
    </source>
</evidence>
<gene>
    <name evidence="1" type="primary">clsA</name>
    <name type="synonym">cls</name>
    <name type="ordered locus">KPN78578_21570</name>
    <name type="ORF">KPN_02190</name>
</gene>
<reference key="1">
    <citation type="submission" date="2006-09" db="EMBL/GenBank/DDBJ databases">
        <authorList>
            <consortium name="The Klebsiella pneumonia Genome Sequencing Project"/>
            <person name="McClelland M."/>
            <person name="Sanderson E.K."/>
            <person name="Spieth J."/>
            <person name="Clifton W.S."/>
            <person name="Latreille P."/>
            <person name="Sabo A."/>
            <person name="Pepin K."/>
            <person name="Bhonagiri V."/>
            <person name="Porwollik S."/>
            <person name="Ali J."/>
            <person name="Wilson R.K."/>
        </authorList>
    </citation>
    <scope>NUCLEOTIDE SEQUENCE [LARGE SCALE GENOMIC DNA]</scope>
    <source>
        <strain>ATCC 700721 / MGH 78578</strain>
    </source>
</reference>
<sequence length="486" mass="54770">MTTFYTVVNWLVILGYWLLIAGVTLRILMKRRAVPSAMAWLLIIYILPLVGIIAYLSFGELHLGKRRAERARAMWPSTAKWLNDLKACKHIFAEDNSPVAESLFKLCERRQGIGGVKGNQLQLLTESDDVMQALIRDIQLARHNIEMVFYIWQPGGMADSVAESLMAAARRGVHCRLMLDSAGSVAFFRSPWAAMMRNAGIEVVEALKVNLMRVFLRRMDLRQHRKMVMIDNYIAYTGSMNMVDPRYFKQDSGVGQWIDLMARMEGPVATSMGIVYSCDWEIETGKRILPPPPDVNIMPFEEASGHTIHTIASGPGFPEDLIHQALLTAAYAAKEHLIMTTPYFVPSDDLLHAICTAAQRGVDVSIILPRKNDSLLVGWASRAFFTELLAAGVKIYQFEGGLLHTKSVLVDGELSLVGTVNLDMRSLWLNFEITLVIDDAGFGSDLAAVQDDYISRSRLLDARLWLKRPLWQRIAERLFYFFSPLL</sequence>
<keyword id="KW-0997">Cell inner membrane</keyword>
<keyword id="KW-1003">Cell membrane</keyword>
<keyword id="KW-0444">Lipid biosynthesis</keyword>
<keyword id="KW-0443">Lipid metabolism</keyword>
<keyword id="KW-0472">Membrane</keyword>
<keyword id="KW-0594">Phospholipid biosynthesis</keyword>
<keyword id="KW-1208">Phospholipid metabolism</keyword>
<keyword id="KW-0677">Repeat</keyword>
<keyword id="KW-0808">Transferase</keyword>
<keyword id="KW-0812">Transmembrane</keyword>
<keyword id="KW-1133">Transmembrane helix</keyword>
<protein>
    <recommendedName>
        <fullName evidence="1">Cardiolipin synthase A</fullName>
        <shortName evidence="1">CL synthase</shortName>
        <ecNumber evidence="1">2.7.8.-</ecNumber>
    </recommendedName>
</protein>
<accession>A6TAJ7</accession>